<protein>
    <recommendedName>
        <fullName evidence="5">Tropinone reductase homolog At2g29360</fullName>
        <ecNumber evidence="5">1.1.1.-</ecNumber>
    </recommendedName>
</protein>
<gene>
    <name evidence="4" type="primary">SDR</name>
    <name evidence="6" type="ordered locus">At2g29360</name>
    <name evidence="7" type="ORF">F16P2.26</name>
</gene>
<keyword id="KW-0521">NADP</keyword>
<keyword id="KW-0560">Oxidoreductase</keyword>
<keyword id="KW-1185">Reference proteome</keyword>
<reference key="1">
    <citation type="journal article" date="1999" name="Nature">
        <title>Sequence and analysis of chromosome 2 of the plant Arabidopsis thaliana.</title>
        <authorList>
            <person name="Lin X."/>
            <person name="Kaul S."/>
            <person name="Rounsley S.D."/>
            <person name="Shea T.P."/>
            <person name="Benito M.-I."/>
            <person name="Town C.D."/>
            <person name="Fujii C.Y."/>
            <person name="Mason T.M."/>
            <person name="Bowman C.L."/>
            <person name="Barnstead M.E."/>
            <person name="Feldblyum T.V."/>
            <person name="Buell C.R."/>
            <person name="Ketchum K.A."/>
            <person name="Lee J.J."/>
            <person name="Ronning C.M."/>
            <person name="Koo H.L."/>
            <person name="Moffat K.S."/>
            <person name="Cronin L.A."/>
            <person name="Shen M."/>
            <person name="Pai G."/>
            <person name="Van Aken S."/>
            <person name="Umayam L."/>
            <person name="Tallon L.J."/>
            <person name="Gill J.E."/>
            <person name="Adams M.D."/>
            <person name="Carrera A.J."/>
            <person name="Creasy T.H."/>
            <person name="Goodman H.M."/>
            <person name="Somerville C.R."/>
            <person name="Copenhaver G.P."/>
            <person name="Preuss D."/>
            <person name="Nierman W.C."/>
            <person name="White O."/>
            <person name="Eisen J.A."/>
            <person name="Salzberg S.L."/>
            <person name="Fraser C.M."/>
            <person name="Venter J.C."/>
        </authorList>
    </citation>
    <scope>NUCLEOTIDE SEQUENCE [LARGE SCALE GENOMIC DNA]</scope>
    <source>
        <strain>cv. Columbia</strain>
    </source>
</reference>
<reference key="2">
    <citation type="journal article" date="2017" name="Plant J.">
        <title>Araport11: a complete reannotation of the Arabidopsis thaliana reference genome.</title>
        <authorList>
            <person name="Cheng C.Y."/>
            <person name="Krishnakumar V."/>
            <person name="Chan A.P."/>
            <person name="Thibaud-Nissen F."/>
            <person name="Schobel S."/>
            <person name="Town C.D."/>
        </authorList>
    </citation>
    <scope>GENOME REANNOTATION</scope>
    <source>
        <strain>cv. Columbia</strain>
    </source>
</reference>
<reference key="3">
    <citation type="journal article" date="2003" name="Science">
        <title>Empirical analysis of transcriptional activity in the Arabidopsis genome.</title>
        <authorList>
            <person name="Yamada K."/>
            <person name="Lim J."/>
            <person name="Dale J.M."/>
            <person name="Chen H."/>
            <person name="Shinn P."/>
            <person name="Palm C.J."/>
            <person name="Southwick A.M."/>
            <person name="Wu H.C."/>
            <person name="Kim C.J."/>
            <person name="Nguyen M."/>
            <person name="Pham P.K."/>
            <person name="Cheuk R.F."/>
            <person name="Karlin-Newmann G."/>
            <person name="Liu S.X."/>
            <person name="Lam B."/>
            <person name="Sakano H."/>
            <person name="Wu T."/>
            <person name="Yu G."/>
            <person name="Miranda M."/>
            <person name="Quach H.L."/>
            <person name="Tripp M."/>
            <person name="Chang C.H."/>
            <person name="Lee J.M."/>
            <person name="Toriumi M.J."/>
            <person name="Chan M.M."/>
            <person name="Tang C.C."/>
            <person name="Onodera C.S."/>
            <person name="Deng J.M."/>
            <person name="Akiyama K."/>
            <person name="Ansari Y."/>
            <person name="Arakawa T."/>
            <person name="Banh J."/>
            <person name="Banno F."/>
            <person name="Bowser L."/>
            <person name="Brooks S.Y."/>
            <person name="Carninci P."/>
            <person name="Chao Q."/>
            <person name="Choy N."/>
            <person name="Enju A."/>
            <person name="Goldsmith A.D."/>
            <person name="Gurjal M."/>
            <person name="Hansen N.F."/>
            <person name="Hayashizaki Y."/>
            <person name="Johnson-Hopson C."/>
            <person name="Hsuan V.W."/>
            <person name="Iida K."/>
            <person name="Karnes M."/>
            <person name="Khan S."/>
            <person name="Koesema E."/>
            <person name="Ishida J."/>
            <person name="Jiang P.X."/>
            <person name="Jones T."/>
            <person name="Kawai J."/>
            <person name="Kamiya A."/>
            <person name="Meyers C."/>
            <person name="Nakajima M."/>
            <person name="Narusaka M."/>
            <person name="Seki M."/>
            <person name="Sakurai T."/>
            <person name="Satou M."/>
            <person name="Tamse R."/>
            <person name="Vaysberg M."/>
            <person name="Wallender E.K."/>
            <person name="Wong C."/>
            <person name="Yamamura Y."/>
            <person name="Yuan S."/>
            <person name="Shinozaki K."/>
            <person name="Davis R.W."/>
            <person name="Theologis A."/>
            <person name="Ecker J.R."/>
        </authorList>
    </citation>
    <scope>NUCLEOTIDE SEQUENCE [LARGE SCALE MRNA]</scope>
    <source>
        <strain>cv. Columbia</strain>
    </source>
</reference>
<reference key="4">
    <citation type="submission" date="2002-03" db="EMBL/GenBank/DDBJ databases">
        <title>Full-length cDNA from Arabidopsis thaliana.</title>
        <authorList>
            <person name="Brover V.V."/>
            <person name="Troukhan M.E."/>
            <person name="Alexandrov N.A."/>
            <person name="Lu Y.-P."/>
            <person name="Flavell R.B."/>
            <person name="Feldmann K.A."/>
        </authorList>
    </citation>
    <scope>NUCLEOTIDE SEQUENCE [LARGE SCALE MRNA]</scope>
</reference>
<reference key="5">
    <citation type="journal article" date="2008" name="Plant J.">
        <title>The functional divergence of short-chain dehydrogenases involved in tropinone reduction.</title>
        <authorList>
            <person name="Brock A."/>
            <person name="Brandt W."/>
            <person name="Drager B."/>
        </authorList>
    </citation>
    <scope>FUNCTION</scope>
    <scope>BIOPHYSICOCHEMICAL PROPERTIES</scope>
    <scope>3D-STRUCTURE MODELING</scope>
    <scope>MUTAGENESIS OF SER-209</scope>
    <source>
        <strain>cv. Columbia</strain>
    </source>
</reference>
<reference key="6">
    <citation type="journal article" date="2009" name="Chem. Biol. Interact.">
        <title>The SDR (short-chain dehydrogenase/reductase and related enzymes) nomenclature initiative.</title>
        <authorList>
            <person name="Persson B."/>
            <person name="Kallberg Y."/>
            <person name="Bray J.E."/>
            <person name="Bruford E."/>
            <person name="Dellaporta S.L."/>
            <person name="Favia A.D."/>
            <person name="Duarte R.G."/>
            <person name="Joernvall H."/>
            <person name="Kavanagh K.L."/>
            <person name="Kedishvili N."/>
            <person name="Kisiela M."/>
            <person name="Maser E."/>
            <person name="Mindnich R."/>
            <person name="Orchard S."/>
            <person name="Penning T.M."/>
            <person name="Thornton J.M."/>
            <person name="Adamski J."/>
            <person name="Oppermann U."/>
        </authorList>
    </citation>
    <scope>GENE FAMILY</scope>
    <scope>NOMENCLATURE</scope>
</reference>
<comment type="function">
    <text evidence="3">Oxidoreductase active on cyclic ketones, but not on tropinone or nortropinone.</text>
</comment>
<comment type="biophysicochemical properties">
    <kinetics>
        <KM evidence="3">4.16 mM for quinuclidinone</KM>
        <KM evidence="3">0.3 mM for 4-methylcyclohexanone</KM>
        <Vmax evidence="3">6.63 nmol/sec/mg enzyme with quinuclidinone as substrate</Vmax>
        <Vmax evidence="3">105.63 nmol/sec/mg enzyme with 4-methylcyclohexanone as substrate</Vmax>
    </kinetics>
    <phDependence>
        <text evidence="3">Optimum pH is 7.5 for quinuclidinone reduction. Optimum pH is 6.0 for 4-methylcyclohexanone reduction.</text>
    </phDependence>
</comment>
<comment type="similarity">
    <text evidence="5">Belongs to the short-chain dehydrogenases/reductases (SDR) family. SDR65C subfamily.</text>
</comment>
<accession>Q9ZW19</accession>
<accession>Q8LCG4</accession>
<sequence length="271" mass="29185">MAKTGESLRDKPRWSLVGMTALVTGGSKGIGEAVVEELATLGARIHTCARDETQLQESLRKWQAKGFQVTTSVCDVSSRDKREKLMETVSTIFEGKLNILVNNVGTCIVKPTLQHTAEDFSFTMATNLESAFHLSQLAHPLLKASGSGSIVLISSVSGVVHVNGASIYGVSKGAMNQLGRNLACEWASDNIRTNSVCPWFIETPLVTESLSNEEFRKEVESRPPMGRVGEVNEVSSLVAFLCLPAASYITGQTICVDGGFTVNGFSFKPLP</sequence>
<evidence type="ECO:0000250" key="1">
    <source>
        <dbReference type="UniProtKB" id="P50162"/>
    </source>
</evidence>
<evidence type="ECO:0000255" key="2">
    <source>
        <dbReference type="PROSITE-ProRule" id="PRU10001"/>
    </source>
</evidence>
<evidence type="ECO:0000269" key="3">
    <source>
    </source>
</evidence>
<evidence type="ECO:0000303" key="4">
    <source>
    </source>
</evidence>
<evidence type="ECO:0000305" key="5"/>
<evidence type="ECO:0000312" key="6">
    <source>
        <dbReference type="Araport" id="AT2G29360"/>
    </source>
</evidence>
<evidence type="ECO:0000312" key="7">
    <source>
        <dbReference type="EMBL" id="AAC95202.1"/>
    </source>
</evidence>
<evidence type="ECO:0000312" key="8">
    <source>
        <dbReference type="Proteomes" id="UP000006548"/>
    </source>
</evidence>
<name>TRNHC_ARATH</name>
<feature type="chain" id="PRO_0000432367" description="Tropinone reductase homolog At2g29360">
    <location>
        <begin position="1"/>
        <end position="271"/>
    </location>
</feature>
<feature type="active site" description="Proton acceptor" evidence="2">
    <location>
        <position position="168"/>
    </location>
</feature>
<feature type="binding site" evidence="1">
    <location>
        <begin position="22"/>
        <end position="46"/>
    </location>
    <ligand>
        <name>NADP(+)</name>
        <dbReference type="ChEBI" id="CHEBI:58349"/>
    </ligand>
</feature>
<feature type="binding site" evidence="1">
    <location>
        <position position="155"/>
    </location>
    <ligand>
        <name>substrate</name>
    </ligand>
</feature>
<feature type="mutagenesis site" description="Loss of activity with quinuclidinone and decreased activity with cyclohexanones." evidence="3">
    <original>S</original>
    <variation>Y</variation>
    <location>
        <position position="209"/>
    </location>
</feature>
<feature type="sequence conflict" description="In Ref. 4; AAM63669." evidence="5" ref="4">
    <original>G</original>
    <variation>V</variation>
    <location>
        <position position="259"/>
    </location>
</feature>
<dbReference type="EC" id="1.1.1.-" evidence="5"/>
<dbReference type="EMBL" id="AC004561">
    <property type="protein sequence ID" value="AAC95202.1"/>
    <property type="molecule type" value="Genomic_DNA"/>
</dbReference>
<dbReference type="EMBL" id="CP002685">
    <property type="protein sequence ID" value="AEC08242.1"/>
    <property type="molecule type" value="Genomic_DNA"/>
</dbReference>
<dbReference type="EMBL" id="AY045613">
    <property type="protein sequence ID" value="AAK73971.1"/>
    <property type="molecule type" value="mRNA"/>
</dbReference>
<dbReference type="EMBL" id="AY090333">
    <property type="protein sequence ID" value="AAL90994.1"/>
    <property type="molecule type" value="mRNA"/>
</dbReference>
<dbReference type="EMBL" id="AY086609">
    <property type="protein sequence ID" value="AAM63669.1"/>
    <property type="molecule type" value="mRNA"/>
</dbReference>
<dbReference type="PIR" id="D84695">
    <property type="entry name" value="D84695"/>
</dbReference>
<dbReference type="RefSeq" id="NP_180497.1">
    <property type="nucleotide sequence ID" value="NM_128490.4"/>
</dbReference>
<dbReference type="SMR" id="Q9ZW19"/>
<dbReference type="FunCoup" id="Q9ZW19">
    <property type="interactions" value="459"/>
</dbReference>
<dbReference type="IntAct" id="Q9ZW19">
    <property type="interactions" value="2"/>
</dbReference>
<dbReference type="STRING" id="3702.Q9ZW19"/>
<dbReference type="PaxDb" id="3702-AT2G29360.1"/>
<dbReference type="ProteomicsDB" id="232409"/>
<dbReference type="EnsemblPlants" id="AT2G29360.1">
    <property type="protein sequence ID" value="AT2G29360.1"/>
    <property type="gene ID" value="AT2G29360"/>
</dbReference>
<dbReference type="GeneID" id="817485"/>
<dbReference type="Gramene" id="AT2G29360.1">
    <property type="protein sequence ID" value="AT2G29360.1"/>
    <property type="gene ID" value="AT2G29360"/>
</dbReference>
<dbReference type="KEGG" id="ath:AT2G29360"/>
<dbReference type="Araport" id="AT2G29360"/>
<dbReference type="TAIR" id="AT2G29360"/>
<dbReference type="eggNOG" id="KOG0725">
    <property type="taxonomic scope" value="Eukaryota"/>
</dbReference>
<dbReference type="HOGENOM" id="CLU_010194_1_1_1"/>
<dbReference type="InParanoid" id="Q9ZW19"/>
<dbReference type="OMA" id="MTGSDCI"/>
<dbReference type="OrthoDB" id="417891at2759"/>
<dbReference type="PhylomeDB" id="Q9ZW19"/>
<dbReference type="BioCyc" id="ARA:AT2G29360-MONOMER"/>
<dbReference type="SABIO-RK" id="Q9ZW19"/>
<dbReference type="PRO" id="PR:Q9ZW19"/>
<dbReference type="Proteomes" id="UP000006548">
    <property type="component" value="Chromosome 2"/>
</dbReference>
<dbReference type="ExpressionAtlas" id="Q9ZW19">
    <property type="expression patterns" value="baseline and differential"/>
</dbReference>
<dbReference type="GO" id="GO:0016491">
    <property type="term" value="F:oxidoreductase activity"/>
    <property type="evidence" value="ECO:0007669"/>
    <property type="project" value="UniProtKB-KW"/>
</dbReference>
<dbReference type="FunFam" id="3.40.50.720:FF:000084">
    <property type="entry name" value="Short-chain dehydrogenase reductase"/>
    <property type="match status" value="1"/>
</dbReference>
<dbReference type="Gene3D" id="3.40.50.720">
    <property type="entry name" value="NAD(P)-binding Rossmann-like Domain"/>
    <property type="match status" value="1"/>
</dbReference>
<dbReference type="InterPro" id="IPR036291">
    <property type="entry name" value="NAD(P)-bd_dom_sf"/>
</dbReference>
<dbReference type="InterPro" id="IPR020904">
    <property type="entry name" value="Sc_DH/Rdtase_CS"/>
</dbReference>
<dbReference type="InterPro" id="IPR002347">
    <property type="entry name" value="SDR_fam"/>
</dbReference>
<dbReference type="InterPro" id="IPR045000">
    <property type="entry name" value="TR"/>
</dbReference>
<dbReference type="PANTHER" id="PTHR42898:SF84">
    <property type="entry name" value="SENESCENCE-ASSOCIATED PROTEIN 13"/>
    <property type="match status" value="1"/>
</dbReference>
<dbReference type="PANTHER" id="PTHR42898">
    <property type="entry name" value="TROPINONE REDUCTASE"/>
    <property type="match status" value="1"/>
</dbReference>
<dbReference type="Pfam" id="PF13561">
    <property type="entry name" value="adh_short_C2"/>
    <property type="match status" value="1"/>
</dbReference>
<dbReference type="PRINTS" id="PR00081">
    <property type="entry name" value="GDHRDH"/>
</dbReference>
<dbReference type="PRINTS" id="PR00080">
    <property type="entry name" value="SDRFAMILY"/>
</dbReference>
<dbReference type="SUPFAM" id="SSF51735">
    <property type="entry name" value="NAD(P)-binding Rossmann-fold domains"/>
    <property type="match status" value="1"/>
</dbReference>
<dbReference type="PROSITE" id="PS00061">
    <property type="entry name" value="ADH_SHORT"/>
    <property type="match status" value="1"/>
</dbReference>
<organism evidence="8">
    <name type="scientific">Arabidopsis thaliana</name>
    <name type="common">Mouse-ear cress</name>
    <dbReference type="NCBI Taxonomy" id="3702"/>
    <lineage>
        <taxon>Eukaryota</taxon>
        <taxon>Viridiplantae</taxon>
        <taxon>Streptophyta</taxon>
        <taxon>Embryophyta</taxon>
        <taxon>Tracheophyta</taxon>
        <taxon>Spermatophyta</taxon>
        <taxon>Magnoliopsida</taxon>
        <taxon>eudicotyledons</taxon>
        <taxon>Gunneridae</taxon>
        <taxon>Pentapetalae</taxon>
        <taxon>rosids</taxon>
        <taxon>malvids</taxon>
        <taxon>Brassicales</taxon>
        <taxon>Brassicaceae</taxon>
        <taxon>Camelineae</taxon>
        <taxon>Arabidopsis</taxon>
    </lineage>
</organism>
<proteinExistence type="evidence at protein level"/>